<sequence length="431" mass="48358">MYRTKVGLKDRQQLYKLIISQLLYDGYISIANGLINEIKPQSVCAPSEQLLHLIKLGMENDDTAVQYAIGRSDTVAPGTGIDLEFDADVQTMSPEASEYETCYVTSHKGPCRVATYSRDGQLIATGSADASIKILDTERMLAKSAMPIEVMMNETAQQNMENHPVIRTLYDHVDEVTCLAFHPTEQILASGSRDYTLKLFDYSKPSAKRAFKYIQEAEMLRSISFHPSGDFILVGTQHPTLRLYDINTFQCFVSCNPQDQHTDAICSVNYNSSANMYVTGSKDGCIKLWDGVSNRCITTFEKAHDGAEVCSAIFSKNSKYILSSGKDSVAKLWEISTGRTLVRYTGAGLSGRQVHRTQAVFNHTEDYVLLPDERTISLCCWDSRTAERRNLLSLGHNNIVRCIVHSPTNPGFMTCSDDFRARFWYRRSTTD</sequence>
<accession>Q05048</accession>
<accession>Q5QPD8</accession>
<gene>
    <name type="primary">CSTF1</name>
</gene>
<keyword id="KW-0002">3D-structure</keyword>
<keyword id="KW-0903">Direct protein sequencing</keyword>
<keyword id="KW-0507">mRNA processing</keyword>
<keyword id="KW-0539">Nucleus</keyword>
<keyword id="KW-1267">Proteomics identification</keyword>
<keyword id="KW-1185">Reference proteome</keyword>
<keyword id="KW-0677">Repeat</keyword>
<keyword id="KW-0853">WD repeat</keyword>
<feature type="chain" id="PRO_0000050944" description="Cleavage stimulation factor subunit 1">
    <location>
        <begin position="1"/>
        <end position="431"/>
    </location>
</feature>
<feature type="repeat" description="WD 1">
    <location>
        <begin position="106"/>
        <end position="145"/>
    </location>
</feature>
<feature type="repeat" description="WD 2">
    <location>
        <begin position="171"/>
        <end position="210"/>
    </location>
</feature>
<feature type="repeat" description="WD 3">
    <location>
        <begin position="215"/>
        <end position="254"/>
    </location>
</feature>
<feature type="repeat" description="WD 4">
    <location>
        <begin position="260"/>
        <end position="301"/>
    </location>
</feature>
<feature type="repeat" description="WD 5">
    <location>
        <begin position="303"/>
        <end position="343"/>
    </location>
</feature>
<feature type="repeat" description="WD 6">
    <location>
        <begin position="395"/>
        <end position="430"/>
    </location>
</feature>
<feature type="region of interest" description="Hydrophobic">
    <location>
        <begin position="14"/>
        <end position="35"/>
    </location>
</feature>
<feature type="helix" evidence="6">
    <location>
        <begin position="96"/>
        <end position="98"/>
    </location>
</feature>
<feature type="strand" evidence="6">
    <location>
        <begin position="100"/>
        <end position="106"/>
    </location>
</feature>
<feature type="strand" evidence="6">
    <location>
        <begin position="111"/>
        <end position="116"/>
    </location>
</feature>
<feature type="strand" evidence="6">
    <location>
        <begin position="120"/>
        <end position="127"/>
    </location>
</feature>
<feature type="strand" evidence="6">
    <location>
        <begin position="132"/>
        <end position="136"/>
    </location>
</feature>
<feature type="helix" evidence="6">
    <location>
        <begin position="137"/>
        <end position="141"/>
    </location>
</feature>
<feature type="strand" evidence="6">
    <location>
        <begin position="164"/>
        <end position="169"/>
    </location>
</feature>
<feature type="strand" evidence="6">
    <location>
        <begin position="176"/>
        <end position="181"/>
    </location>
</feature>
<feature type="strand" evidence="6">
    <location>
        <begin position="183"/>
        <end position="192"/>
    </location>
</feature>
<feature type="strand" evidence="6">
    <location>
        <begin position="195"/>
        <end position="201"/>
    </location>
</feature>
<feature type="strand" evidence="6">
    <location>
        <begin position="211"/>
        <end position="215"/>
    </location>
</feature>
<feature type="strand" evidence="6">
    <location>
        <begin position="220"/>
        <end position="225"/>
    </location>
</feature>
<feature type="strand" evidence="6">
    <location>
        <begin position="229"/>
        <end position="240"/>
    </location>
</feature>
<feature type="strand" evidence="6">
    <location>
        <begin position="242"/>
        <end position="245"/>
    </location>
</feature>
<feature type="turn" evidence="6">
    <location>
        <begin position="246"/>
        <end position="248"/>
    </location>
</feature>
<feature type="strand" evidence="6">
    <location>
        <begin position="251"/>
        <end position="253"/>
    </location>
</feature>
<feature type="helix" evidence="6">
    <location>
        <begin position="257"/>
        <end position="259"/>
    </location>
</feature>
<feature type="strand" evidence="6">
    <location>
        <begin position="265"/>
        <end position="270"/>
    </location>
</feature>
<feature type="strand" evidence="6">
    <location>
        <begin position="274"/>
        <end position="281"/>
    </location>
</feature>
<feature type="strand" evidence="6">
    <location>
        <begin position="286"/>
        <end position="290"/>
    </location>
</feature>
<feature type="turn" evidence="6">
    <location>
        <begin position="291"/>
        <end position="293"/>
    </location>
</feature>
<feature type="strand" evidence="6">
    <location>
        <begin position="296"/>
        <end position="300"/>
    </location>
</feature>
<feature type="turn" evidence="6">
    <location>
        <begin position="301"/>
        <end position="306"/>
    </location>
</feature>
<feature type="strand" evidence="6">
    <location>
        <begin position="309"/>
        <end position="314"/>
    </location>
</feature>
<feature type="strand" evidence="6">
    <location>
        <begin position="318"/>
        <end position="325"/>
    </location>
</feature>
<feature type="strand" evidence="6">
    <location>
        <begin position="330"/>
        <end position="334"/>
    </location>
</feature>
<feature type="turn" evidence="6">
    <location>
        <begin position="335"/>
        <end position="338"/>
    </location>
</feature>
<feature type="strand" evidence="6">
    <location>
        <begin position="339"/>
        <end position="344"/>
    </location>
</feature>
<feature type="strand" evidence="6">
    <location>
        <begin position="350"/>
        <end position="352"/>
    </location>
</feature>
<feature type="strand" evidence="6">
    <location>
        <begin position="365"/>
        <end position="372"/>
    </location>
</feature>
<feature type="turn" evidence="6">
    <location>
        <begin position="373"/>
        <end position="376"/>
    </location>
</feature>
<feature type="strand" evidence="6">
    <location>
        <begin position="377"/>
        <end position="382"/>
    </location>
</feature>
<feature type="turn" evidence="6">
    <location>
        <begin position="383"/>
        <end position="385"/>
    </location>
</feature>
<feature type="strand" evidence="6">
    <location>
        <begin position="400"/>
        <end position="405"/>
    </location>
</feature>
<feature type="strand" evidence="6">
    <location>
        <begin position="407"/>
        <end position="416"/>
    </location>
</feature>
<feature type="strand" evidence="6">
    <location>
        <begin position="419"/>
        <end position="425"/>
    </location>
</feature>
<dbReference type="EMBL" id="L02547">
    <property type="protein sequence ID" value="AAA35691.1"/>
    <property type="molecule type" value="mRNA"/>
</dbReference>
<dbReference type="EMBL" id="BT007138">
    <property type="protein sequence ID" value="AAP35802.1"/>
    <property type="molecule type" value="mRNA"/>
</dbReference>
<dbReference type="EMBL" id="AK312774">
    <property type="protein sequence ID" value="BAG35638.1"/>
    <property type="molecule type" value="mRNA"/>
</dbReference>
<dbReference type="EMBL" id="AL121914">
    <property type="status" value="NOT_ANNOTATED_CDS"/>
    <property type="molecule type" value="Genomic_DNA"/>
</dbReference>
<dbReference type="EMBL" id="CH471077">
    <property type="protein sequence ID" value="EAW75548.1"/>
    <property type="molecule type" value="Genomic_DNA"/>
</dbReference>
<dbReference type="EMBL" id="CH471077">
    <property type="protein sequence ID" value="EAW75549.1"/>
    <property type="molecule type" value="Genomic_DNA"/>
</dbReference>
<dbReference type="EMBL" id="BC001011">
    <property type="protein sequence ID" value="AAH01011.1"/>
    <property type="molecule type" value="mRNA"/>
</dbReference>
<dbReference type="EMBL" id="BC007425">
    <property type="protein sequence ID" value="AAH07425.1"/>
    <property type="molecule type" value="mRNA"/>
</dbReference>
<dbReference type="CCDS" id="CCDS13452.1"/>
<dbReference type="PIR" id="A45142">
    <property type="entry name" value="A45142"/>
</dbReference>
<dbReference type="RefSeq" id="NP_001028693.1">
    <property type="nucleotide sequence ID" value="NM_001033521.2"/>
</dbReference>
<dbReference type="RefSeq" id="NP_001028694.1">
    <property type="nucleotide sequence ID" value="NM_001033522.2"/>
</dbReference>
<dbReference type="RefSeq" id="NP_001315.1">
    <property type="nucleotide sequence ID" value="NM_001324.3"/>
</dbReference>
<dbReference type="RefSeq" id="XP_011526902.1">
    <property type="nucleotide sequence ID" value="XM_011528600.2"/>
</dbReference>
<dbReference type="RefSeq" id="XP_054179045.1">
    <property type="nucleotide sequence ID" value="XM_054323070.1"/>
</dbReference>
<dbReference type="PDB" id="6B3X">
    <property type="method" value="X-ray"/>
    <property type="resolution" value="2.30 A"/>
    <property type="chains" value="A=80-431"/>
</dbReference>
<dbReference type="PDBsum" id="6B3X"/>
<dbReference type="SMR" id="Q05048"/>
<dbReference type="BioGRID" id="107859">
    <property type="interactions" value="106"/>
</dbReference>
<dbReference type="ComplexPortal" id="CPX-2701">
    <property type="entry name" value="Cleavage stimulation factor complex, CSTF2 variant"/>
</dbReference>
<dbReference type="ComplexPortal" id="CPX-2703">
    <property type="entry name" value="Cleavage stimulation factor complex, CSTF2T variant"/>
</dbReference>
<dbReference type="CORUM" id="Q05048"/>
<dbReference type="FunCoup" id="Q05048">
    <property type="interactions" value="3712"/>
</dbReference>
<dbReference type="IntAct" id="Q05048">
    <property type="interactions" value="38"/>
</dbReference>
<dbReference type="MINT" id="Q05048"/>
<dbReference type="STRING" id="9606.ENSP00000217109"/>
<dbReference type="GlyGen" id="Q05048">
    <property type="glycosylation" value="2 sites, 1 N-linked glycan (1 site), 1 O-linked glycan (1 site)"/>
</dbReference>
<dbReference type="iPTMnet" id="Q05048"/>
<dbReference type="MetOSite" id="Q05048"/>
<dbReference type="PhosphoSitePlus" id="Q05048"/>
<dbReference type="SwissPalm" id="Q05048"/>
<dbReference type="BioMuta" id="CSTF1"/>
<dbReference type="REPRODUCTION-2DPAGE" id="IPI00011528"/>
<dbReference type="jPOST" id="Q05048"/>
<dbReference type="MassIVE" id="Q05048"/>
<dbReference type="PaxDb" id="9606-ENSP00000217109"/>
<dbReference type="PeptideAtlas" id="Q05048"/>
<dbReference type="ProteomicsDB" id="58303"/>
<dbReference type="Pumba" id="Q05048"/>
<dbReference type="Antibodypedia" id="28869">
    <property type="antibodies" value="247 antibodies from 31 providers"/>
</dbReference>
<dbReference type="DNASU" id="1477"/>
<dbReference type="Ensembl" id="ENST00000217109.9">
    <property type="protein sequence ID" value="ENSP00000217109.4"/>
    <property type="gene ID" value="ENSG00000101138.12"/>
</dbReference>
<dbReference type="GeneID" id="1477"/>
<dbReference type="KEGG" id="hsa:1477"/>
<dbReference type="MANE-Select" id="ENST00000217109.9">
    <property type="protein sequence ID" value="ENSP00000217109.4"/>
    <property type="RefSeq nucleotide sequence ID" value="NM_001324.3"/>
    <property type="RefSeq protein sequence ID" value="NP_001315.1"/>
</dbReference>
<dbReference type="UCSC" id="uc002xxm.2">
    <property type="organism name" value="human"/>
</dbReference>
<dbReference type="AGR" id="HGNC:2483"/>
<dbReference type="CTD" id="1477"/>
<dbReference type="DisGeNET" id="1477"/>
<dbReference type="GeneCards" id="CSTF1"/>
<dbReference type="HGNC" id="HGNC:2483">
    <property type="gene designation" value="CSTF1"/>
</dbReference>
<dbReference type="HPA" id="ENSG00000101138">
    <property type="expression patterns" value="Low tissue specificity"/>
</dbReference>
<dbReference type="MIM" id="600369">
    <property type="type" value="gene"/>
</dbReference>
<dbReference type="neXtProt" id="NX_Q05048"/>
<dbReference type="OpenTargets" id="ENSG00000101138"/>
<dbReference type="PharmGKB" id="PA26985"/>
<dbReference type="VEuPathDB" id="HostDB:ENSG00000101138"/>
<dbReference type="eggNOG" id="KOG0640">
    <property type="taxonomic scope" value="Eukaryota"/>
</dbReference>
<dbReference type="GeneTree" id="ENSGT00910000144253"/>
<dbReference type="HOGENOM" id="CLU_041619_0_0_1"/>
<dbReference type="InParanoid" id="Q05048"/>
<dbReference type="OMA" id="HTEDYVM"/>
<dbReference type="OrthoDB" id="14421at2759"/>
<dbReference type="PAN-GO" id="Q05048">
    <property type="GO annotations" value="1 GO annotation based on evolutionary models"/>
</dbReference>
<dbReference type="PhylomeDB" id="Q05048"/>
<dbReference type="TreeFam" id="TF314234"/>
<dbReference type="PathwayCommons" id="Q05048"/>
<dbReference type="Reactome" id="R-HSA-72187">
    <property type="pathway name" value="mRNA 3'-end processing"/>
</dbReference>
<dbReference type="Reactome" id="R-HSA-72203">
    <property type="pathway name" value="Processing of Capped Intron-Containing Pre-mRNA"/>
</dbReference>
<dbReference type="Reactome" id="R-HSA-73856">
    <property type="pathway name" value="RNA Polymerase II Transcription Termination"/>
</dbReference>
<dbReference type="Reactome" id="R-HSA-77595">
    <property type="pathway name" value="Processing of Intronless Pre-mRNAs"/>
</dbReference>
<dbReference type="SignaLink" id="Q05048"/>
<dbReference type="SIGNOR" id="Q05048"/>
<dbReference type="BioGRID-ORCS" id="1477">
    <property type="hits" value="606 hits in 1171 CRISPR screens"/>
</dbReference>
<dbReference type="CD-CODE" id="DEE660B4">
    <property type="entry name" value="Stress granule"/>
</dbReference>
<dbReference type="ChiTaRS" id="CSTF1">
    <property type="organism name" value="human"/>
</dbReference>
<dbReference type="GeneWiki" id="CSTF1"/>
<dbReference type="GenomeRNAi" id="1477"/>
<dbReference type="Pharos" id="Q05048">
    <property type="development level" value="Tbio"/>
</dbReference>
<dbReference type="PRO" id="PR:Q05048"/>
<dbReference type="Proteomes" id="UP000005640">
    <property type="component" value="Chromosome 20"/>
</dbReference>
<dbReference type="RNAct" id="Q05048">
    <property type="molecule type" value="protein"/>
</dbReference>
<dbReference type="Bgee" id="ENSG00000101138">
    <property type="expression patterns" value="Expressed in male germ line stem cell (sensu Vertebrata) in testis and 161 other cell types or tissues"/>
</dbReference>
<dbReference type="ExpressionAtlas" id="Q05048">
    <property type="expression patterns" value="baseline and differential"/>
</dbReference>
<dbReference type="GO" id="GO:0005848">
    <property type="term" value="C:mRNA cleavage stimulating factor complex"/>
    <property type="evidence" value="ECO:0000318"/>
    <property type="project" value="GO_Central"/>
</dbReference>
<dbReference type="GO" id="GO:0005654">
    <property type="term" value="C:nucleoplasm"/>
    <property type="evidence" value="ECO:0000314"/>
    <property type="project" value="HPA"/>
</dbReference>
<dbReference type="GO" id="GO:0003723">
    <property type="term" value="F:RNA binding"/>
    <property type="evidence" value="ECO:0007005"/>
    <property type="project" value="UniProtKB"/>
</dbReference>
<dbReference type="GO" id="GO:0031124">
    <property type="term" value="P:mRNA 3'-end processing"/>
    <property type="evidence" value="ECO:0007669"/>
    <property type="project" value="InterPro"/>
</dbReference>
<dbReference type="CDD" id="cd00200">
    <property type="entry name" value="WD40"/>
    <property type="match status" value="1"/>
</dbReference>
<dbReference type="FunFam" id="1.20.960.50:FF:000001">
    <property type="entry name" value="Cleavage stimulation factor subunit 1"/>
    <property type="match status" value="1"/>
</dbReference>
<dbReference type="FunFam" id="2.130.10.10:FF:000064">
    <property type="entry name" value="Cleavage stimulation factor subunit 1"/>
    <property type="match status" value="1"/>
</dbReference>
<dbReference type="FunFam" id="2.130.10.10:FF:000089">
    <property type="entry name" value="Cleavage stimulation factor subunit 1"/>
    <property type="match status" value="1"/>
</dbReference>
<dbReference type="Gene3D" id="1.20.960.50">
    <property type="entry name" value="Cleavage stimulation factor subunit 1, dimerisation domain"/>
    <property type="match status" value="1"/>
</dbReference>
<dbReference type="Gene3D" id="2.130.10.10">
    <property type="entry name" value="YVTN repeat-like/Quinoprotein amine dehydrogenase"/>
    <property type="match status" value="2"/>
</dbReference>
<dbReference type="InterPro" id="IPR044633">
    <property type="entry name" value="CstF1-like"/>
</dbReference>
<dbReference type="InterPro" id="IPR032028">
    <property type="entry name" value="CSTF1_dimer"/>
</dbReference>
<dbReference type="InterPro" id="IPR038184">
    <property type="entry name" value="CSTF1_dimer_sf"/>
</dbReference>
<dbReference type="InterPro" id="IPR015943">
    <property type="entry name" value="WD40/YVTN_repeat-like_dom_sf"/>
</dbReference>
<dbReference type="InterPro" id="IPR019775">
    <property type="entry name" value="WD40_repeat_CS"/>
</dbReference>
<dbReference type="InterPro" id="IPR036322">
    <property type="entry name" value="WD40_repeat_dom_sf"/>
</dbReference>
<dbReference type="InterPro" id="IPR001680">
    <property type="entry name" value="WD40_rpt"/>
</dbReference>
<dbReference type="PANTHER" id="PTHR44133">
    <property type="entry name" value="CLEAVAGE STIMULATION FACTOR SUBUNIT 1"/>
    <property type="match status" value="1"/>
</dbReference>
<dbReference type="PANTHER" id="PTHR44133:SF2">
    <property type="entry name" value="CLEAVAGE STIMULATION FACTOR SUBUNIT 1"/>
    <property type="match status" value="1"/>
</dbReference>
<dbReference type="Pfam" id="PF16699">
    <property type="entry name" value="CSTF1_dimer"/>
    <property type="match status" value="1"/>
</dbReference>
<dbReference type="Pfam" id="PF00400">
    <property type="entry name" value="WD40"/>
    <property type="match status" value="6"/>
</dbReference>
<dbReference type="SMART" id="SM00320">
    <property type="entry name" value="WD40"/>
    <property type="match status" value="6"/>
</dbReference>
<dbReference type="SUPFAM" id="SSF50978">
    <property type="entry name" value="WD40 repeat-like"/>
    <property type="match status" value="1"/>
</dbReference>
<dbReference type="PROSITE" id="PS00678">
    <property type="entry name" value="WD_REPEATS_1"/>
    <property type="match status" value="1"/>
</dbReference>
<dbReference type="PROSITE" id="PS50082">
    <property type="entry name" value="WD_REPEATS_2"/>
    <property type="match status" value="4"/>
</dbReference>
<dbReference type="PROSITE" id="PS50294">
    <property type="entry name" value="WD_REPEATS_REGION"/>
    <property type="match status" value="1"/>
</dbReference>
<name>CSTF1_HUMAN</name>
<reference key="1">
    <citation type="journal article" date="1992" name="J. Biol. Chem.">
        <title>A human polyadenylation factor is a G protein beta-subunit homologue.</title>
        <authorList>
            <person name="Takagaki Y."/>
            <person name="Manley J.L."/>
        </authorList>
    </citation>
    <scope>NUCLEOTIDE SEQUENCE [MRNA]</scope>
    <scope>PROTEIN SEQUENCE OF 101-119 AND 155-170</scope>
</reference>
<reference key="2">
    <citation type="submission" date="2003-05" db="EMBL/GenBank/DDBJ databases">
        <title>Cloning of human full-length CDSs in BD Creator(TM) system donor vector.</title>
        <authorList>
            <person name="Kalnine N."/>
            <person name="Chen X."/>
            <person name="Rolfs A."/>
            <person name="Halleck A."/>
            <person name="Hines L."/>
            <person name="Eisenstein S."/>
            <person name="Koundinya M."/>
            <person name="Raphael J."/>
            <person name="Moreira D."/>
            <person name="Kelley T."/>
            <person name="LaBaer J."/>
            <person name="Lin Y."/>
            <person name="Phelan M."/>
            <person name="Farmer A."/>
        </authorList>
    </citation>
    <scope>NUCLEOTIDE SEQUENCE [LARGE SCALE MRNA]</scope>
</reference>
<reference key="3">
    <citation type="journal article" date="2004" name="Nat. Genet.">
        <title>Complete sequencing and characterization of 21,243 full-length human cDNAs.</title>
        <authorList>
            <person name="Ota T."/>
            <person name="Suzuki Y."/>
            <person name="Nishikawa T."/>
            <person name="Otsuki T."/>
            <person name="Sugiyama T."/>
            <person name="Irie R."/>
            <person name="Wakamatsu A."/>
            <person name="Hayashi K."/>
            <person name="Sato H."/>
            <person name="Nagai K."/>
            <person name="Kimura K."/>
            <person name="Makita H."/>
            <person name="Sekine M."/>
            <person name="Obayashi M."/>
            <person name="Nishi T."/>
            <person name="Shibahara T."/>
            <person name="Tanaka T."/>
            <person name="Ishii S."/>
            <person name="Yamamoto J."/>
            <person name="Saito K."/>
            <person name="Kawai Y."/>
            <person name="Isono Y."/>
            <person name="Nakamura Y."/>
            <person name="Nagahari K."/>
            <person name="Murakami K."/>
            <person name="Yasuda T."/>
            <person name="Iwayanagi T."/>
            <person name="Wagatsuma M."/>
            <person name="Shiratori A."/>
            <person name="Sudo H."/>
            <person name="Hosoiri T."/>
            <person name="Kaku Y."/>
            <person name="Kodaira H."/>
            <person name="Kondo H."/>
            <person name="Sugawara M."/>
            <person name="Takahashi M."/>
            <person name="Kanda K."/>
            <person name="Yokoi T."/>
            <person name="Furuya T."/>
            <person name="Kikkawa E."/>
            <person name="Omura Y."/>
            <person name="Abe K."/>
            <person name="Kamihara K."/>
            <person name="Katsuta N."/>
            <person name="Sato K."/>
            <person name="Tanikawa M."/>
            <person name="Yamazaki M."/>
            <person name="Ninomiya K."/>
            <person name="Ishibashi T."/>
            <person name="Yamashita H."/>
            <person name="Murakawa K."/>
            <person name="Fujimori K."/>
            <person name="Tanai H."/>
            <person name="Kimata M."/>
            <person name="Watanabe M."/>
            <person name="Hiraoka S."/>
            <person name="Chiba Y."/>
            <person name="Ishida S."/>
            <person name="Ono Y."/>
            <person name="Takiguchi S."/>
            <person name="Watanabe S."/>
            <person name="Yosida M."/>
            <person name="Hotuta T."/>
            <person name="Kusano J."/>
            <person name="Kanehori K."/>
            <person name="Takahashi-Fujii A."/>
            <person name="Hara H."/>
            <person name="Tanase T.-O."/>
            <person name="Nomura Y."/>
            <person name="Togiya S."/>
            <person name="Komai F."/>
            <person name="Hara R."/>
            <person name="Takeuchi K."/>
            <person name="Arita M."/>
            <person name="Imose N."/>
            <person name="Musashino K."/>
            <person name="Yuuki H."/>
            <person name="Oshima A."/>
            <person name="Sasaki N."/>
            <person name="Aotsuka S."/>
            <person name="Yoshikawa Y."/>
            <person name="Matsunawa H."/>
            <person name="Ichihara T."/>
            <person name="Shiohata N."/>
            <person name="Sano S."/>
            <person name="Moriya S."/>
            <person name="Momiyama H."/>
            <person name="Satoh N."/>
            <person name="Takami S."/>
            <person name="Terashima Y."/>
            <person name="Suzuki O."/>
            <person name="Nakagawa S."/>
            <person name="Senoh A."/>
            <person name="Mizoguchi H."/>
            <person name="Goto Y."/>
            <person name="Shimizu F."/>
            <person name="Wakebe H."/>
            <person name="Hishigaki H."/>
            <person name="Watanabe T."/>
            <person name="Sugiyama A."/>
            <person name="Takemoto M."/>
            <person name="Kawakami B."/>
            <person name="Yamazaki M."/>
            <person name="Watanabe K."/>
            <person name="Kumagai A."/>
            <person name="Itakura S."/>
            <person name="Fukuzumi Y."/>
            <person name="Fujimori Y."/>
            <person name="Komiyama M."/>
            <person name="Tashiro H."/>
            <person name="Tanigami A."/>
            <person name="Fujiwara T."/>
            <person name="Ono T."/>
            <person name="Yamada K."/>
            <person name="Fujii Y."/>
            <person name="Ozaki K."/>
            <person name="Hirao M."/>
            <person name="Ohmori Y."/>
            <person name="Kawabata A."/>
            <person name="Hikiji T."/>
            <person name="Kobatake N."/>
            <person name="Inagaki H."/>
            <person name="Ikema Y."/>
            <person name="Okamoto S."/>
            <person name="Okitani R."/>
            <person name="Kawakami T."/>
            <person name="Noguchi S."/>
            <person name="Itoh T."/>
            <person name="Shigeta K."/>
            <person name="Senba T."/>
            <person name="Matsumura K."/>
            <person name="Nakajima Y."/>
            <person name="Mizuno T."/>
            <person name="Morinaga M."/>
            <person name="Sasaki M."/>
            <person name="Togashi T."/>
            <person name="Oyama M."/>
            <person name="Hata H."/>
            <person name="Watanabe M."/>
            <person name="Komatsu T."/>
            <person name="Mizushima-Sugano J."/>
            <person name="Satoh T."/>
            <person name="Shirai Y."/>
            <person name="Takahashi Y."/>
            <person name="Nakagawa K."/>
            <person name="Okumura K."/>
            <person name="Nagase T."/>
            <person name="Nomura N."/>
            <person name="Kikuchi H."/>
            <person name="Masuho Y."/>
            <person name="Yamashita R."/>
            <person name="Nakai K."/>
            <person name="Yada T."/>
            <person name="Nakamura Y."/>
            <person name="Ohara O."/>
            <person name="Isogai T."/>
            <person name="Sugano S."/>
        </authorList>
    </citation>
    <scope>NUCLEOTIDE SEQUENCE [LARGE SCALE MRNA]</scope>
    <source>
        <tissue>Testis</tissue>
    </source>
</reference>
<reference key="4">
    <citation type="journal article" date="2001" name="Nature">
        <title>The DNA sequence and comparative analysis of human chromosome 20.</title>
        <authorList>
            <person name="Deloukas P."/>
            <person name="Matthews L.H."/>
            <person name="Ashurst J.L."/>
            <person name="Burton J."/>
            <person name="Gilbert J.G.R."/>
            <person name="Jones M."/>
            <person name="Stavrides G."/>
            <person name="Almeida J.P."/>
            <person name="Babbage A.K."/>
            <person name="Bagguley C.L."/>
            <person name="Bailey J."/>
            <person name="Barlow K.F."/>
            <person name="Bates K.N."/>
            <person name="Beard L.M."/>
            <person name="Beare D.M."/>
            <person name="Beasley O.P."/>
            <person name="Bird C.P."/>
            <person name="Blakey S.E."/>
            <person name="Bridgeman A.M."/>
            <person name="Brown A.J."/>
            <person name="Buck D."/>
            <person name="Burrill W.D."/>
            <person name="Butler A.P."/>
            <person name="Carder C."/>
            <person name="Carter N.P."/>
            <person name="Chapman J.C."/>
            <person name="Clamp M."/>
            <person name="Clark G."/>
            <person name="Clark L.N."/>
            <person name="Clark S.Y."/>
            <person name="Clee C.M."/>
            <person name="Clegg S."/>
            <person name="Cobley V.E."/>
            <person name="Collier R.E."/>
            <person name="Connor R.E."/>
            <person name="Corby N.R."/>
            <person name="Coulson A."/>
            <person name="Coville G.J."/>
            <person name="Deadman R."/>
            <person name="Dhami P.D."/>
            <person name="Dunn M."/>
            <person name="Ellington A.G."/>
            <person name="Frankland J.A."/>
            <person name="Fraser A."/>
            <person name="French L."/>
            <person name="Garner P."/>
            <person name="Grafham D.V."/>
            <person name="Griffiths C."/>
            <person name="Griffiths M.N.D."/>
            <person name="Gwilliam R."/>
            <person name="Hall R.E."/>
            <person name="Hammond S."/>
            <person name="Harley J.L."/>
            <person name="Heath P.D."/>
            <person name="Ho S."/>
            <person name="Holden J.L."/>
            <person name="Howden P.J."/>
            <person name="Huckle E."/>
            <person name="Hunt A.R."/>
            <person name="Hunt S.E."/>
            <person name="Jekosch K."/>
            <person name="Johnson C.M."/>
            <person name="Johnson D."/>
            <person name="Kay M.P."/>
            <person name="Kimberley A.M."/>
            <person name="King A."/>
            <person name="Knights A."/>
            <person name="Laird G.K."/>
            <person name="Lawlor S."/>
            <person name="Lehvaeslaiho M.H."/>
            <person name="Leversha M.A."/>
            <person name="Lloyd C."/>
            <person name="Lloyd D.M."/>
            <person name="Lovell J.D."/>
            <person name="Marsh V.L."/>
            <person name="Martin S.L."/>
            <person name="McConnachie L.J."/>
            <person name="McLay K."/>
            <person name="McMurray A.A."/>
            <person name="Milne S.A."/>
            <person name="Mistry D."/>
            <person name="Moore M.J.F."/>
            <person name="Mullikin J.C."/>
            <person name="Nickerson T."/>
            <person name="Oliver K."/>
            <person name="Parker A."/>
            <person name="Patel R."/>
            <person name="Pearce T.A.V."/>
            <person name="Peck A.I."/>
            <person name="Phillimore B.J.C.T."/>
            <person name="Prathalingam S.R."/>
            <person name="Plumb R.W."/>
            <person name="Ramsay H."/>
            <person name="Rice C.M."/>
            <person name="Ross M.T."/>
            <person name="Scott C.E."/>
            <person name="Sehra H.K."/>
            <person name="Shownkeen R."/>
            <person name="Sims S."/>
            <person name="Skuce C.D."/>
            <person name="Smith M.L."/>
            <person name="Soderlund C."/>
            <person name="Steward C.A."/>
            <person name="Sulston J.E."/>
            <person name="Swann R.M."/>
            <person name="Sycamore N."/>
            <person name="Taylor R."/>
            <person name="Tee L."/>
            <person name="Thomas D.W."/>
            <person name="Thorpe A."/>
            <person name="Tracey A."/>
            <person name="Tromans A.C."/>
            <person name="Vaudin M."/>
            <person name="Wall M."/>
            <person name="Wallis J.M."/>
            <person name="Whitehead S.L."/>
            <person name="Whittaker P."/>
            <person name="Willey D.L."/>
            <person name="Williams L."/>
            <person name="Williams S.A."/>
            <person name="Wilming L."/>
            <person name="Wray P.W."/>
            <person name="Hubbard T."/>
            <person name="Durbin R.M."/>
            <person name="Bentley D.R."/>
            <person name="Beck S."/>
            <person name="Rogers J."/>
        </authorList>
    </citation>
    <scope>NUCLEOTIDE SEQUENCE [LARGE SCALE GENOMIC DNA]</scope>
</reference>
<reference key="5">
    <citation type="submission" date="2005-09" db="EMBL/GenBank/DDBJ databases">
        <authorList>
            <person name="Mural R.J."/>
            <person name="Istrail S."/>
            <person name="Sutton G."/>
            <person name="Florea L."/>
            <person name="Halpern A.L."/>
            <person name="Mobarry C.M."/>
            <person name="Lippert R."/>
            <person name="Walenz B."/>
            <person name="Shatkay H."/>
            <person name="Dew I."/>
            <person name="Miller J.R."/>
            <person name="Flanigan M.J."/>
            <person name="Edwards N.J."/>
            <person name="Bolanos R."/>
            <person name="Fasulo D."/>
            <person name="Halldorsson B.V."/>
            <person name="Hannenhalli S."/>
            <person name="Turner R."/>
            <person name="Yooseph S."/>
            <person name="Lu F."/>
            <person name="Nusskern D.R."/>
            <person name="Shue B.C."/>
            <person name="Zheng X.H."/>
            <person name="Zhong F."/>
            <person name="Delcher A.L."/>
            <person name="Huson D.H."/>
            <person name="Kravitz S.A."/>
            <person name="Mouchard L."/>
            <person name="Reinert K."/>
            <person name="Remington K.A."/>
            <person name="Clark A.G."/>
            <person name="Waterman M.S."/>
            <person name="Eichler E.E."/>
            <person name="Adams M.D."/>
            <person name="Hunkapiller M.W."/>
            <person name="Myers E.W."/>
            <person name="Venter J.C."/>
        </authorList>
    </citation>
    <scope>NUCLEOTIDE SEQUENCE [LARGE SCALE GENOMIC DNA]</scope>
</reference>
<reference key="6">
    <citation type="journal article" date="2004" name="Genome Res.">
        <title>The status, quality, and expansion of the NIH full-length cDNA project: the Mammalian Gene Collection (MGC).</title>
        <authorList>
            <consortium name="The MGC Project Team"/>
        </authorList>
    </citation>
    <scope>NUCLEOTIDE SEQUENCE [LARGE SCALE MRNA]</scope>
    <source>
        <tissue>Muscle</tissue>
    </source>
</reference>
<reference key="7">
    <citation type="journal article" date="1999" name="Science">
        <title>Functional interaction of BRCA1-associated BARD1 with polyadenylation factor CstF-50.</title>
        <authorList>
            <person name="Kleiman F.E."/>
            <person name="Manley J.L."/>
        </authorList>
    </citation>
    <scope>INTERACTION WITH BARD1</scope>
    <scope>SUBCELLULAR LOCATION</scope>
</reference>
<reference key="8">
    <citation type="journal article" date="2000" name="Mol. Cell. Biol.">
        <title>Complex protein interactions within the human polyadenylation machinery identify a novel component.</title>
        <authorList>
            <person name="Takagaki Y."/>
            <person name="Manley J.L."/>
        </authorList>
    </citation>
    <scope>SUBUNIT</scope>
    <scope>INTERACTION WITH CSTF3</scope>
    <scope>FUNCTION</scope>
</reference>
<reference key="9">
    <citation type="journal article" date="2011" name="BMC Syst. Biol.">
        <title>Initial characterization of the human central proteome.</title>
        <authorList>
            <person name="Burkard T.R."/>
            <person name="Planyavsky M."/>
            <person name="Kaupe I."/>
            <person name="Breitwieser F.P."/>
            <person name="Buerckstuemmer T."/>
            <person name="Bennett K.L."/>
            <person name="Superti-Furga G."/>
            <person name="Colinge J."/>
        </authorList>
    </citation>
    <scope>IDENTIFICATION BY MASS SPECTROMETRY [LARGE SCALE ANALYSIS]</scope>
</reference>
<reference key="10">
    <citation type="journal article" date="2015" name="PLoS ONE">
        <title>Identification of Novel Proteins Co-Purifying with Cockayne Syndrome Group B (CSB) Reveals Potential Roles for CSB in RNA Metabolism and Chromatin Dynamics.</title>
        <authorList>
            <person name="Nicolai S."/>
            <person name="Filippi S."/>
            <person name="Caputo M."/>
            <person name="Cipak L."/>
            <person name="Gregan J."/>
            <person name="Ammerer G."/>
            <person name="Frontini M."/>
            <person name="Willems D."/>
            <person name="Prantera G."/>
            <person name="Balajee A.S."/>
            <person name="Proietti-De-Santis L."/>
        </authorList>
    </citation>
    <scope>INTERACTION WITH ERCC6</scope>
</reference>
<organism>
    <name type="scientific">Homo sapiens</name>
    <name type="common">Human</name>
    <dbReference type="NCBI Taxonomy" id="9606"/>
    <lineage>
        <taxon>Eukaryota</taxon>
        <taxon>Metazoa</taxon>
        <taxon>Chordata</taxon>
        <taxon>Craniata</taxon>
        <taxon>Vertebrata</taxon>
        <taxon>Euteleostomi</taxon>
        <taxon>Mammalia</taxon>
        <taxon>Eutheria</taxon>
        <taxon>Euarchontoglires</taxon>
        <taxon>Primates</taxon>
        <taxon>Haplorrhini</taxon>
        <taxon>Catarrhini</taxon>
        <taxon>Hominidae</taxon>
        <taxon>Homo</taxon>
    </lineage>
</organism>
<proteinExistence type="evidence at protein level"/>
<protein>
    <recommendedName>
        <fullName>Cleavage stimulation factor subunit 1</fullName>
    </recommendedName>
    <alternativeName>
        <fullName>CF-1 50 kDa subunit</fullName>
    </alternativeName>
    <alternativeName>
        <fullName>Cleavage stimulation factor 50 kDa subunit</fullName>
        <shortName>CSTF 50 kDa subunit</shortName>
        <shortName>CstF-50</shortName>
    </alternativeName>
</protein>
<evidence type="ECO:0000269" key="1">
    <source>
    </source>
</evidence>
<evidence type="ECO:0000269" key="2">
    <source>
    </source>
</evidence>
<evidence type="ECO:0000269" key="3">
    <source>
    </source>
</evidence>
<evidence type="ECO:0000269" key="4">
    <source>
    </source>
</evidence>
<evidence type="ECO:0000303" key="5">
    <source>
    </source>
</evidence>
<evidence type="ECO:0007829" key="6">
    <source>
        <dbReference type="PDB" id="6B3X"/>
    </source>
</evidence>
<comment type="function">
    <text evidence="5">One of the multiple factors required for polyadenylation and 3'-end cleavage of mammalian pre-mRNAs (PubMed:10669729). May be responsible for the interaction of CSTF with other factors to form a stable complex on the pre-mRNA (PubMed:10669729).</text>
</comment>
<comment type="subunit">
    <text evidence="1 2 4">Homodimer (PubMed:10669729). The CSTF complex is composed of CSTF1 (50 kDa subunit), CSTF2 (64 kDa subunit) and CSTF3 (77 kDa subunit) (PubMed:10669729). Interacts (via repeats WD) directly with CSTF3 (PubMed:10669729). Interacts (via repeat WD6) with BARD1 (PubMed:10477523). Interacts with ERCC6 (PubMed:26030138).</text>
</comment>
<comment type="interaction">
    <interactant intactId="EBI-1789619">
        <id>Q05048</id>
    </interactant>
    <interactant intactId="EBI-473181">
        <id>Q99728</id>
        <label>BARD1</label>
    </interactant>
    <organismsDiffer>false</organismsDiffer>
    <experiments>4</experiments>
</comment>
<comment type="interaction">
    <interactant intactId="EBI-1789619">
        <id>Q05048</id>
    </interactant>
    <interactant intactId="EBI-74615">
        <id>Q9H0E2</id>
        <label>TOLLIP</label>
    </interactant>
    <organismsDiffer>false</organismsDiffer>
    <experiments>5</experiments>
</comment>
<comment type="subcellular location">
    <subcellularLocation>
        <location evidence="1">Nucleus</location>
    </subcellularLocation>
</comment>
<comment type="domain">
    <text evidence="2">N-terminus mediates homodimerization.</text>
</comment>
<comment type="PTM">
    <text evidence="3">The N-terminus is blocked.</text>
</comment>